<reference key="1">
    <citation type="submission" date="2005-09" db="EMBL/GenBank/DDBJ databases">
        <title>Complete sequence of chromosome 1 of Rhodobacter sphaeroides 2.4.1.</title>
        <authorList>
            <person name="Copeland A."/>
            <person name="Lucas S."/>
            <person name="Lapidus A."/>
            <person name="Barry K."/>
            <person name="Detter J.C."/>
            <person name="Glavina T."/>
            <person name="Hammon N."/>
            <person name="Israni S."/>
            <person name="Pitluck S."/>
            <person name="Richardson P."/>
            <person name="Mackenzie C."/>
            <person name="Choudhary M."/>
            <person name="Larimer F."/>
            <person name="Hauser L.J."/>
            <person name="Land M."/>
            <person name="Donohue T.J."/>
            <person name="Kaplan S."/>
        </authorList>
    </citation>
    <scope>NUCLEOTIDE SEQUENCE [LARGE SCALE GENOMIC DNA]</scope>
    <source>
        <strain>ATCC 17023 / DSM 158 / JCM 6121 / CCUG 31486 / LMG 2827 / NBRC 12203 / NCIMB 8253 / ATH 2.4.1.</strain>
    </source>
</reference>
<keyword id="KW-0963">Cytoplasm</keyword>
<keyword id="KW-0489">Methyltransferase</keyword>
<keyword id="KW-1185">Reference proteome</keyword>
<keyword id="KW-0698">rRNA processing</keyword>
<keyword id="KW-0949">S-adenosyl-L-methionine</keyword>
<keyword id="KW-0808">Transferase</keyword>
<gene>
    <name evidence="1" type="primary">rsmG</name>
    <name type="ordered locus">RHOS4_28410</name>
    <name type="ORF">RSP_1228</name>
</gene>
<feature type="chain" id="PRO_0000335410" description="Ribosomal RNA small subunit methyltransferase G">
    <location>
        <begin position="1"/>
        <end position="206"/>
    </location>
</feature>
<feature type="binding site" evidence="1">
    <location>
        <position position="71"/>
    </location>
    <ligand>
        <name>S-adenosyl-L-methionine</name>
        <dbReference type="ChEBI" id="CHEBI:59789"/>
    </ligand>
</feature>
<feature type="binding site" evidence="1">
    <location>
        <position position="76"/>
    </location>
    <ligand>
        <name>S-adenosyl-L-methionine</name>
        <dbReference type="ChEBI" id="CHEBI:59789"/>
    </ligand>
</feature>
<feature type="binding site" evidence="1">
    <location>
        <begin position="125"/>
        <end position="126"/>
    </location>
    <ligand>
        <name>S-adenosyl-L-methionine</name>
        <dbReference type="ChEBI" id="CHEBI:59789"/>
    </ligand>
</feature>
<feature type="binding site" evidence="1">
    <location>
        <position position="139"/>
    </location>
    <ligand>
        <name>S-adenosyl-L-methionine</name>
        <dbReference type="ChEBI" id="CHEBI:59789"/>
    </ligand>
</feature>
<evidence type="ECO:0000255" key="1">
    <source>
        <dbReference type="HAMAP-Rule" id="MF_00074"/>
    </source>
</evidence>
<name>RSMG_CERS4</name>
<proteinExistence type="inferred from homology"/>
<sequence length="206" mass="22336">MMQESVLAQLDVSRETSEKLSHFVALVEKWNKAVNLIGRSTVDSIWTRHVLDSAQLRTHLASQPRLWLDLGSGSGFPGIVVAIMAAYESPESRFVLVESDQRKATFLRTACRELKLSASVLAARIESLPPQKADVISARALAALPDLCALAAPHLAPNGICLFPKGVGHISEIAAARQSWNMEVETLPSLTDPDAVILKLKALAHV</sequence>
<organism>
    <name type="scientific">Cereibacter sphaeroides (strain ATCC 17023 / DSM 158 / JCM 6121 / CCUG 31486 / LMG 2827 / NBRC 12203 / NCIMB 8253 / ATH 2.4.1.)</name>
    <name type="common">Rhodobacter sphaeroides</name>
    <dbReference type="NCBI Taxonomy" id="272943"/>
    <lineage>
        <taxon>Bacteria</taxon>
        <taxon>Pseudomonadati</taxon>
        <taxon>Pseudomonadota</taxon>
        <taxon>Alphaproteobacteria</taxon>
        <taxon>Rhodobacterales</taxon>
        <taxon>Paracoccaceae</taxon>
        <taxon>Cereibacter</taxon>
    </lineage>
</organism>
<protein>
    <recommendedName>
        <fullName evidence="1">Ribosomal RNA small subunit methyltransferase G</fullName>
        <ecNumber evidence="1">2.1.1.170</ecNumber>
    </recommendedName>
    <alternativeName>
        <fullName evidence="1">16S rRNA 7-methylguanosine methyltransferase</fullName>
        <shortName evidence="1">16S rRNA m7G methyltransferase</shortName>
    </alternativeName>
</protein>
<accession>Q3IYH5</accession>
<comment type="function">
    <text evidence="1">Specifically methylates the N7 position of guanine in position 527 of 16S rRNA.</text>
</comment>
<comment type="catalytic activity">
    <reaction evidence="1">
        <text>guanosine(527) in 16S rRNA + S-adenosyl-L-methionine = N(7)-methylguanosine(527) in 16S rRNA + S-adenosyl-L-homocysteine</text>
        <dbReference type="Rhea" id="RHEA:42732"/>
        <dbReference type="Rhea" id="RHEA-COMP:10209"/>
        <dbReference type="Rhea" id="RHEA-COMP:10210"/>
        <dbReference type="ChEBI" id="CHEBI:57856"/>
        <dbReference type="ChEBI" id="CHEBI:59789"/>
        <dbReference type="ChEBI" id="CHEBI:74269"/>
        <dbReference type="ChEBI" id="CHEBI:74480"/>
        <dbReference type="EC" id="2.1.1.170"/>
    </reaction>
</comment>
<comment type="subcellular location">
    <subcellularLocation>
        <location evidence="1">Cytoplasm</location>
    </subcellularLocation>
</comment>
<comment type="similarity">
    <text evidence="1">Belongs to the methyltransferase superfamily. RNA methyltransferase RsmG family.</text>
</comment>
<dbReference type="EC" id="2.1.1.170" evidence="1"/>
<dbReference type="EMBL" id="CP000143">
    <property type="protein sequence ID" value="ABA80409.1"/>
    <property type="molecule type" value="Genomic_DNA"/>
</dbReference>
<dbReference type="RefSeq" id="WP_011338804.1">
    <property type="nucleotide sequence ID" value="NC_007493.2"/>
</dbReference>
<dbReference type="RefSeq" id="YP_354310.1">
    <property type="nucleotide sequence ID" value="NC_007493.2"/>
</dbReference>
<dbReference type="SMR" id="Q3IYH5"/>
<dbReference type="STRING" id="272943.RSP_1228"/>
<dbReference type="EnsemblBacteria" id="ABA80409">
    <property type="protein sequence ID" value="ABA80409"/>
    <property type="gene ID" value="RSP_1228"/>
</dbReference>
<dbReference type="GeneID" id="3719676"/>
<dbReference type="KEGG" id="rsp:RSP_1228"/>
<dbReference type="PATRIC" id="fig|272943.9.peg.3209"/>
<dbReference type="eggNOG" id="COG0357">
    <property type="taxonomic scope" value="Bacteria"/>
</dbReference>
<dbReference type="OrthoDB" id="9808773at2"/>
<dbReference type="PhylomeDB" id="Q3IYH5"/>
<dbReference type="Proteomes" id="UP000002703">
    <property type="component" value="Chromosome 1"/>
</dbReference>
<dbReference type="GO" id="GO:0005829">
    <property type="term" value="C:cytosol"/>
    <property type="evidence" value="ECO:0007669"/>
    <property type="project" value="TreeGrafter"/>
</dbReference>
<dbReference type="GO" id="GO:0070043">
    <property type="term" value="F:rRNA (guanine-N7-)-methyltransferase activity"/>
    <property type="evidence" value="ECO:0007669"/>
    <property type="project" value="UniProtKB-UniRule"/>
</dbReference>
<dbReference type="Gene3D" id="3.40.50.150">
    <property type="entry name" value="Vaccinia Virus protein VP39"/>
    <property type="match status" value="1"/>
</dbReference>
<dbReference type="HAMAP" id="MF_00074">
    <property type="entry name" value="16SrRNA_methyltr_G"/>
    <property type="match status" value="1"/>
</dbReference>
<dbReference type="InterPro" id="IPR003682">
    <property type="entry name" value="rRNA_ssu_MeTfrase_G"/>
</dbReference>
<dbReference type="InterPro" id="IPR029063">
    <property type="entry name" value="SAM-dependent_MTases_sf"/>
</dbReference>
<dbReference type="NCBIfam" id="TIGR00138">
    <property type="entry name" value="rsmG_gidB"/>
    <property type="match status" value="1"/>
</dbReference>
<dbReference type="PANTHER" id="PTHR31760">
    <property type="entry name" value="S-ADENOSYL-L-METHIONINE-DEPENDENT METHYLTRANSFERASES SUPERFAMILY PROTEIN"/>
    <property type="match status" value="1"/>
</dbReference>
<dbReference type="PANTHER" id="PTHR31760:SF0">
    <property type="entry name" value="S-ADENOSYL-L-METHIONINE-DEPENDENT METHYLTRANSFERASES SUPERFAMILY PROTEIN"/>
    <property type="match status" value="1"/>
</dbReference>
<dbReference type="Pfam" id="PF02527">
    <property type="entry name" value="GidB"/>
    <property type="match status" value="1"/>
</dbReference>
<dbReference type="PIRSF" id="PIRSF003078">
    <property type="entry name" value="GidB"/>
    <property type="match status" value="1"/>
</dbReference>
<dbReference type="SUPFAM" id="SSF53335">
    <property type="entry name" value="S-adenosyl-L-methionine-dependent methyltransferases"/>
    <property type="match status" value="1"/>
</dbReference>